<sequence length="451" mass="50136">MRECISIHVGQAGVQIGNACWELYCLEHGIQPDGQMPSDKTIGGGDDSFNTFFSETGAGKHVPRAVFVDLEPTVIDEVRTGTYRQLFHPEQLITGKEDAANNYARGHYTIGKEIIDLVLDRIRKLADQCTGLQGFLVFHSFGGGTGSGFTSLLMERLSVDYGKKSKLEFSIYPAPQVSTAVVEPYNSILTTHTTLEHSDCAFMVDNEAIYDICRRNLDIERPTYTNLNRLIGQIVSSITASLRFDGALNVDLTEFQTNLVPYPRIHFPLATYAPVISAEKAYHEQLSVAEITNACFEPANQMVKCDPRHGKYMACCLLYRGDVVPKDVNAAIATIKTKRTIQFVDWCPTGFKVGINYQPPTVVPGGDLAKVQRAVCMLSNTTAIAEAWARLDHKFDLMYAKRAFVHWYVGEGMEEGEFSEAREDMAALEKDYEEVGVDSVEGEGEEEGEEY</sequence>
<reference key="1">
    <citation type="submission" date="2020-06" db="EMBL/GenBank/DDBJ databases">
        <title>Gallus gallus (Chicken) genome, bGalGal1, GRCg7b, maternal haplotype autosomes + Z &amp; W.</title>
        <authorList>
            <person name="Warren W."/>
            <person name="Formenti G."/>
            <person name="Fedrigo O."/>
            <person name="Haase B."/>
            <person name="Mountcastle J."/>
            <person name="Balacco J."/>
            <person name="Tracey A."/>
            <person name="Schneider V."/>
            <person name="Okimoto R."/>
            <person name="Cheng H."/>
            <person name="Hawken R."/>
            <person name="Howe K."/>
            <person name="Jarvis E.D."/>
        </authorList>
    </citation>
    <scope>NUCLEOTIDE SEQUENCE [LARGE SCALE GENOMIC DNA]</scope>
</reference>
<reference key="2">
    <citation type="journal article" date="1981" name="Nature">
        <title>Nucleotide and corresponding amino acid sequences encoded by alpha and beta tubulin mRNAs.</title>
        <authorList>
            <person name="Valenzuela P."/>
            <person name="Quiroga M."/>
            <person name="Zaldivar J."/>
            <person name="Rutter W.J."/>
            <person name="Kirschner M.W."/>
            <person name="Cleveland D.W."/>
        </authorList>
    </citation>
    <scope>NUCLEOTIDE SEQUENCE [MRNA] OF 40-451</scope>
</reference>
<reference key="3">
    <citation type="journal article" date="1973" name="Proc. Natl. Acad. Sci. U.S.A.">
        <title>Isolation and partial characterization of alpha and beta-tubulin from outer doublets of sea-urchin sperm and microtubules of chick-embryo brain.</title>
        <authorList>
            <person name="Luduena R.F."/>
            <person name="Woodward D.O."/>
        </authorList>
    </citation>
    <scope>PROTEIN SEQUENCE OF 1-25</scope>
</reference>
<proteinExistence type="evidence at protein level"/>
<protein>
    <recommendedName>
        <fullName>Tubulin alpha-1A chain</fullName>
        <ecNumber evidence="1">3.6.5.-</ecNumber>
    </recommendedName>
    <component>
        <recommendedName>
            <fullName>Detyrosinated tubulin alpha-1A chain</fullName>
        </recommendedName>
    </component>
</protein>
<keyword id="KW-0002">3D-structure</keyword>
<keyword id="KW-0963">Cytoplasm</keyword>
<keyword id="KW-0206">Cytoskeleton</keyword>
<keyword id="KW-0903">Direct protein sequencing</keyword>
<keyword id="KW-0342">GTP-binding</keyword>
<keyword id="KW-0378">Hydrolase</keyword>
<keyword id="KW-1017">Isopeptide bond</keyword>
<keyword id="KW-0460">Magnesium</keyword>
<keyword id="KW-0479">Metal-binding</keyword>
<keyword id="KW-0493">Microtubule</keyword>
<keyword id="KW-0547">Nucleotide-binding</keyword>
<keyword id="KW-1185">Reference proteome</keyword>
<gene>
    <name type="primary">TUBA1A</name>
</gene>
<dbReference type="EC" id="3.6.5.-" evidence="1"/>
<dbReference type="EMBL" id="V00388">
    <property type="protein sequence ID" value="CAA23686.1"/>
    <property type="molecule type" value="mRNA"/>
</dbReference>
<dbReference type="PIR" id="A02968">
    <property type="entry name" value="UBCHA"/>
</dbReference>
<dbReference type="RefSeq" id="NP_001292201.2">
    <property type="nucleotide sequence ID" value="NM_001305272.2"/>
</dbReference>
<dbReference type="PDB" id="9C6R">
    <property type="method" value="EM"/>
    <property type="resolution" value="3.20 A"/>
    <property type="chains" value="A/F/K/P/U/Z/e/j=1-451"/>
</dbReference>
<dbReference type="PDB" id="9C6S">
    <property type="method" value="EM"/>
    <property type="resolution" value="3.52 A"/>
    <property type="chains" value="A/C/I/M/Q/U/Y/c/g=1-451"/>
</dbReference>
<dbReference type="PDBsum" id="9C6R"/>
<dbReference type="PDBsum" id="9C6S"/>
<dbReference type="EMDB" id="EMD-45263"/>
<dbReference type="EMDB" id="EMD-45265"/>
<dbReference type="SMR" id="P02552"/>
<dbReference type="FunCoup" id="P02552">
    <property type="interactions" value="253"/>
</dbReference>
<dbReference type="GeneID" id="429035"/>
<dbReference type="VEuPathDB" id="HostDB:LOC100857858"/>
<dbReference type="InParanoid" id="P02552"/>
<dbReference type="OMA" id="FANAFCK"/>
<dbReference type="PhylomeDB" id="P02552"/>
<dbReference type="Proteomes" id="UP000000539">
    <property type="component" value="Unassembled WGS sequence"/>
</dbReference>
<dbReference type="GO" id="GO:0005737">
    <property type="term" value="C:cytoplasm"/>
    <property type="evidence" value="ECO:0000318"/>
    <property type="project" value="GO_Central"/>
</dbReference>
<dbReference type="GO" id="GO:0005874">
    <property type="term" value="C:microtubule"/>
    <property type="evidence" value="ECO:0000318"/>
    <property type="project" value="GO_Central"/>
</dbReference>
<dbReference type="GO" id="GO:0005525">
    <property type="term" value="F:GTP binding"/>
    <property type="evidence" value="ECO:0000318"/>
    <property type="project" value="GO_Central"/>
</dbReference>
<dbReference type="GO" id="GO:0016787">
    <property type="term" value="F:hydrolase activity"/>
    <property type="evidence" value="ECO:0007669"/>
    <property type="project" value="UniProtKB-KW"/>
</dbReference>
<dbReference type="GO" id="GO:0046872">
    <property type="term" value="F:metal ion binding"/>
    <property type="evidence" value="ECO:0007669"/>
    <property type="project" value="UniProtKB-KW"/>
</dbReference>
<dbReference type="GO" id="GO:0005200">
    <property type="term" value="F:structural constituent of cytoskeleton"/>
    <property type="evidence" value="ECO:0000318"/>
    <property type="project" value="GO_Central"/>
</dbReference>
<dbReference type="GO" id="GO:0000226">
    <property type="term" value="P:microtubule cytoskeleton organization"/>
    <property type="evidence" value="ECO:0000318"/>
    <property type="project" value="GO_Central"/>
</dbReference>
<dbReference type="GO" id="GO:0000278">
    <property type="term" value="P:mitotic cell cycle"/>
    <property type="evidence" value="ECO:0000318"/>
    <property type="project" value="GO_Central"/>
</dbReference>
<dbReference type="CDD" id="cd02186">
    <property type="entry name" value="alpha_tubulin"/>
    <property type="match status" value="1"/>
</dbReference>
<dbReference type="FunFam" id="1.10.287.600:FF:000005">
    <property type="entry name" value="Tubulin alpha chain"/>
    <property type="match status" value="1"/>
</dbReference>
<dbReference type="FunFam" id="3.30.1330.20:FF:000001">
    <property type="entry name" value="Tubulin alpha chain"/>
    <property type="match status" value="1"/>
</dbReference>
<dbReference type="FunFam" id="3.40.50.1440:FF:000002">
    <property type="entry name" value="Tubulin alpha chain"/>
    <property type="match status" value="1"/>
</dbReference>
<dbReference type="Gene3D" id="1.10.287.600">
    <property type="entry name" value="Helix hairpin bin"/>
    <property type="match status" value="1"/>
</dbReference>
<dbReference type="Gene3D" id="3.30.1330.20">
    <property type="entry name" value="Tubulin/FtsZ, C-terminal domain"/>
    <property type="match status" value="1"/>
</dbReference>
<dbReference type="Gene3D" id="3.40.50.1440">
    <property type="entry name" value="Tubulin/FtsZ, GTPase domain"/>
    <property type="match status" value="1"/>
</dbReference>
<dbReference type="InterPro" id="IPR002452">
    <property type="entry name" value="Alpha_tubulin"/>
</dbReference>
<dbReference type="InterPro" id="IPR008280">
    <property type="entry name" value="Tub_FtsZ_C"/>
</dbReference>
<dbReference type="InterPro" id="IPR000217">
    <property type="entry name" value="Tubulin"/>
</dbReference>
<dbReference type="InterPro" id="IPR037103">
    <property type="entry name" value="Tubulin/FtsZ-like_C"/>
</dbReference>
<dbReference type="InterPro" id="IPR018316">
    <property type="entry name" value="Tubulin/FtsZ_2-layer-sand-dom"/>
</dbReference>
<dbReference type="InterPro" id="IPR036525">
    <property type="entry name" value="Tubulin/FtsZ_GTPase_sf"/>
</dbReference>
<dbReference type="InterPro" id="IPR023123">
    <property type="entry name" value="Tubulin_C"/>
</dbReference>
<dbReference type="InterPro" id="IPR017975">
    <property type="entry name" value="Tubulin_CS"/>
</dbReference>
<dbReference type="InterPro" id="IPR003008">
    <property type="entry name" value="Tubulin_FtsZ_GTPase"/>
</dbReference>
<dbReference type="PANTHER" id="PTHR11588">
    <property type="entry name" value="TUBULIN"/>
    <property type="match status" value="1"/>
</dbReference>
<dbReference type="Pfam" id="PF00091">
    <property type="entry name" value="Tubulin"/>
    <property type="match status" value="1"/>
</dbReference>
<dbReference type="Pfam" id="PF03953">
    <property type="entry name" value="Tubulin_C"/>
    <property type="match status" value="1"/>
</dbReference>
<dbReference type="PRINTS" id="PR01162">
    <property type="entry name" value="ALPHATUBULIN"/>
</dbReference>
<dbReference type="PRINTS" id="PR01161">
    <property type="entry name" value="TUBULIN"/>
</dbReference>
<dbReference type="SMART" id="SM00864">
    <property type="entry name" value="Tubulin"/>
    <property type="match status" value="1"/>
</dbReference>
<dbReference type="SMART" id="SM00865">
    <property type="entry name" value="Tubulin_C"/>
    <property type="match status" value="1"/>
</dbReference>
<dbReference type="SUPFAM" id="SSF55307">
    <property type="entry name" value="Tubulin C-terminal domain-like"/>
    <property type="match status" value="1"/>
</dbReference>
<dbReference type="SUPFAM" id="SSF52490">
    <property type="entry name" value="Tubulin nucleotide-binding domain-like"/>
    <property type="match status" value="1"/>
</dbReference>
<dbReference type="PROSITE" id="PS00227">
    <property type="entry name" value="TUBULIN"/>
    <property type="match status" value="1"/>
</dbReference>
<accession>P02552</accession>
<evidence type="ECO:0000250" key="1">
    <source>
        <dbReference type="UniProtKB" id="P68363"/>
    </source>
</evidence>
<evidence type="ECO:0000250" key="2">
    <source>
        <dbReference type="UniProtKB" id="P68369"/>
    </source>
</evidence>
<evidence type="ECO:0000250" key="3">
    <source>
        <dbReference type="UniProtKB" id="Q71U36"/>
    </source>
</evidence>
<evidence type="ECO:0000250" key="4">
    <source>
        <dbReference type="UniProtKB" id="Q9BQE3"/>
    </source>
</evidence>
<evidence type="ECO:0000256" key="5">
    <source>
        <dbReference type="SAM" id="MobiDB-lite"/>
    </source>
</evidence>
<evidence type="ECO:0000305" key="6"/>
<name>TBA1A_CHICK</name>
<comment type="function">
    <text>Tubulin is the major constituent of microtubules, a cylinder consisting of laterally associated linear protofilaments composed of alpha- and beta-tubulin heterodimers. Microtubules grow by the addition of GTP-tubulin dimers to the microtubule end, where a stabilizing cap forms. Below the cap, tubulin dimers are in GDP-bound state, owing to GTPase activity of alpha-tubulin.</text>
</comment>
<comment type="catalytic activity">
    <reaction evidence="1">
        <text>GTP + H2O = GDP + phosphate + H(+)</text>
        <dbReference type="Rhea" id="RHEA:19669"/>
        <dbReference type="ChEBI" id="CHEBI:15377"/>
        <dbReference type="ChEBI" id="CHEBI:15378"/>
        <dbReference type="ChEBI" id="CHEBI:37565"/>
        <dbReference type="ChEBI" id="CHEBI:43474"/>
        <dbReference type="ChEBI" id="CHEBI:58189"/>
    </reaction>
    <physiologicalReaction direction="left-to-right" evidence="1">
        <dbReference type="Rhea" id="RHEA:19670"/>
    </physiologicalReaction>
</comment>
<comment type="cofactor">
    <cofactor evidence="1">
        <name>Mg(2+)</name>
        <dbReference type="ChEBI" id="CHEBI:18420"/>
    </cofactor>
</comment>
<comment type="subunit">
    <text>Dimer of alpha and beta chains. A typical microtubule is a hollow water-filled tube with an outer diameter of 25 nm and an inner diameter of 15 nM. Alpha-beta heterodimers associate head-to-tail to form protofilaments running lengthwise along the microtubule wall with the beta-tubulin subunit facing the microtubule plus end conferring a structural polarity. Microtubules usually have 13 protofilaments but different protofilament numbers can be found in some organisms and specialized cells.</text>
</comment>
<comment type="subcellular location">
    <subcellularLocation>
        <location>Cytoplasm</location>
        <location>Cytoskeleton</location>
    </subcellularLocation>
</comment>
<comment type="PTM">
    <text evidence="2">Some glutamate residues at the C-terminus are polyglycylated, resulting in polyglycine chains on the gamma-carboxyl group. Glycylation is mainly limited to tubulin incorporated into axonemes (cilia and flagella) whereas glutamylation is prevalent in neuronal cells, centrioles, axonemes, and the mitotic spindle. Both modifications can coexist on the same protein on adjacent residues, and lowering polyglycylation levels increases polyglutamylation, and reciprocally. The precise function of polyglycylation is still unclear.</text>
</comment>
<comment type="PTM">
    <text evidence="2 3">Some glutamate residues at the C-terminus are polyglutamylated, resulting in polyglutamate chains on the gamma-carboxyl group (By similarity). Polyglutamylation plays a key role in microtubule severing by spastin (SPAST). SPAST preferentially recognizes and acts on microtubules decorated with short polyglutamate tails: severing activity by SPAST increases as the number of glutamates per tubulin rises from one to eight, but decreases beyond this glutamylation threshold (By similarity).</text>
</comment>
<comment type="PTM">
    <text evidence="2 3">Undergoes a tyrosination/detyrosination cycle, the cyclic removal and re-addition of a C-terminal tyrosine residue by the enzymes tubulin tyrosine carboxypeptidase (MATCAP1, VASH1 or VASH2) and tubulin tyrosine ligase (TTL), respectively.</text>
</comment>
<comment type="PTM">
    <molecule>Tubulin alpha-1A chain</molecule>
    <text evidence="2 3">Tyrosination promotes microtubule interaction with CAP-Gly microtubule plus-end tracking proteins. Tyrosinated tubulins regulate the initiation of dynein-driven motility.</text>
</comment>
<comment type="PTM">
    <molecule>Detyrosinated tubulin alpha-1A chain</molecule>
    <text evidence="2 3">Detyrosination is involved in metaphase plate congression by guiding chromosomes during mitosis (By similarity). Detyrosination increases microtubules-dependent mechanotransduction in dystrophic cardiac and skeletal muscle. In cardiomyocytes, detyrosinated microtubules are required to resist to contractile compression during contraction (By similarity).</text>
</comment>
<comment type="miscellaneous">
    <text>There are at least seven alpha tubulin genes (alpha-1 to alpha-6, and alpha-8), and a pseudogene (alpha-7) in chicken.</text>
</comment>
<comment type="similarity">
    <text evidence="6">Belongs to the tubulin family.</text>
</comment>
<organism>
    <name type="scientific">Gallus gallus</name>
    <name type="common">Chicken</name>
    <dbReference type="NCBI Taxonomy" id="9031"/>
    <lineage>
        <taxon>Eukaryota</taxon>
        <taxon>Metazoa</taxon>
        <taxon>Chordata</taxon>
        <taxon>Craniata</taxon>
        <taxon>Vertebrata</taxon>
        <taxon>Euteleostomi</taxon>
        <taxon>Archelosauria</taxon>
        <taxon>Archosauria</taxon>
        <taxon>Dinosauria</taxon>
        <taxon>Saurischia</taxon>
        <taxon>Theropoda</taxon>
        <taxon>Coelurosauria</taxon>
        <taxon>Aves</taxon>
        <taxon>Neognathae</taxon>
        <taxon>Galloanserae</taxon>
        <taxon>Galliformes</taxon>
        <taxon>Phasianidae</taxon>
        <taxon>Phasianinae</taxon>
        <taxon>Gallus</taxon>
    </lineage>
</organism>
<feature type="chain" id="PRO_0000048147" description="Tubulin alpha-1A chain">
    <location>
        <begin position="1"/>
        <end position="451"/>
    </location>
</feature>
<feature type="chain" id="PRO_0000437404" description="Detyrosinated tubulin alpha-1A chain" evidence="4">
    <location>
        <begin position="1"/>
        <end position="450"/>
    </location>
</feature>
<feature type="region of interest" description="Disordered" evidence="5">
    <location>
        <begin position="432"/>
        <end position="451"/>
    </location>
</feature>
<feature type="short sequence motif" description="MREC motif" evidence="1">
    <location>
        <begin position="1"/>
        <end position="4"/>
    </location>
</feature>
<feature type="active site" evidence="1">
    <location>
        <position position="254"/>
    </location>
</feature>
<feature type="binding site" evidence="1">
    <location>
        <position position="11"/>
    </location>
    <ligand>
        <name>GTP</name>
        <dbReference type="ChEBI" id="CHEBI:37565"/>
    </ligand>
</feature>
<feature type="binding site" evidence="1">
    <location>
        <position position="71"/>
    </location>
    <ligand>
        <name>GTP</name>
        <dbReference type="ChEBI" id="CHEBI:37565"/>
    </ligand>
</feature>
<feature type="binding site" evidence="1">
    <location>
        <position position="71"/>
    </location>
    <ligand>
        <name>Mg(2+)</name>
        <dbReference type="ChEBI" id="CHEBI:18420"/>
    </ligand>
</feature>
<feature type="binding site" evidence="1">
    <location>
        <position position="140"/>
    </location>
    <ligand>
        <name>GTP</name>
        <dbReference type="ChEBI" id="CHEBI:37565"/>
    </ligand>
</feature>
<feature type="binding site" evidence="1">
    <location>
        <position position="144"/>
    </location>
    <ligand>
        <name>GTP</name>
        <dbReference type="ChEBI" id="CHEBI:37565"/>
    </ligand>
</feature>
<feature type="binding site" evidence="1">
    <location>
        <position position="145"/>
    </location>
    <ligand>
        <name>GTP</name>
        <dbReference type="ChEBI" id="CHEBI:37565"/>
    </ligand>
</feature>
<feature type="binding site" evidence="1">
    <location>
        <position position="179"/>
    </location>
    <ligand>
        <name>GTP</name>
        <dbReference type="ChEBI" id="CHEBI:37565"/>
    </ligand>
</feature>
<feature type="binding site" evidence="1">
    <location>
        <position position="206"/>
    </location>
    <ligand>
        <name>GTP</name>
        <dbReference type="ChEBI" id="CHEBI:37565"/>
    </ligand>
</feature>
<feature type="binding site" evidence="1">
    <location>
        <position position="228"/>
    </location>
    <ligand>
        <name>GTP</name>
        <dbReference type="ChEBI" id="CHEBI:37565"/>
    </ligand>
</feature>
<feature type="site" description="Involved in polymerization">
    <location>
        <position position="451"/>
    </location>
</feature>
<feature type="modified residue" description="5-glutamyl polyglutamate" evidence="2">
    <location>
        <position position="445"/>
    </location>
</feature>